<protein>
    <recommendedName>
        <fullName>Aquaporin</fullName>
    </recommendedName>
</protein>
<reference key="1">
    <citation type="submission" date="2003-06" db="EMBL/GenBank/DDBJ databases">
        <title>Role for aquaporins in encephalitozoonosis.</title>
        <authorList>
            <person name="Wasson K."/>
            <person name="Barry P.A."/>
        </authorList>
    </citation>
    <scope>NUCLEOTIDE SEQUENCE [GENOMIC DNA]</scope>
</reference>
<feature type="chain" id="PRO_0000385185" description="Aquaporin">
    <location>
        <begin position="1"/>
        <end position="251"/>
    </location>
</feature>
<feature type="topological domain" description="Cytoplasmic" evidence="2">
    <location>
        <begin position="1"/>
        <end position="11"/>
    </location>
</feature>
<feature type="transmembrane region" description="Helical" evidence="2">
    <location>
        <begin position="12"/>
        <end position="32"/>
    </location>
</feature>
<feature type="topological domain" description="Extracellular" evidence="2">
    <location>
        <begin position="33"/>
        <end position="42"/>
    </location>
</feature>
<feature type="transmembrane region" description="Helical" evidence="2">
    <location>
        <begin position="43"/>
        <end position="63"/>
    </location>
</feature>
<feature type="topological domain" description="Cytoplasmic" evidence="2">
    <location>
        <begin position="64"/>
        <end position="86"/>
    </location>
</feature>
<feature type="transmembrane region" description="Helical" evidence="2">
    <location>
        <begin position="87"/>
        <end position="107"/>
    </location>
</feature>
<feature type="topological domain" description="Extracellular" evidence="2">
    <location>
        <begin position="108"/>
        <end position="133"/>
    </location>
</feature>
<feature type="transmembrane region" description="Helical" evidence="2">
    <location>
        <begin position="134"/>
        <end position="154"/>
    </location>
</feature>
<feature type="topological domain" description="Cytoplasmic" evidence="2">
    <location>
        <begin position="155"/>
        <end position="179"/>
    </location>
</feature>
<feature type="transmembrane region" description="Helical" evidence="2">
    <location>
        <begin position="180"/>
        <end position="200"/>
    </location>
</feature>
<feature type="topological domain" description="Extracellular" evidence="2">
    <location>
        <begin position="201"/>
        <end position="224"/>
    </location>
</feature>
<feature type="transmembrane region" description="Helical" evidence="2">
    <location>
        <begin position="225"/>
        <end position="245"/>
    </location>
</feature>
<feature type="topological domain" description="Cytoplasmic" evidence="2">
    <location>
        <begin position="246"/>
        <end position="251"/>
    </location>
</feature>
<feature type="short sequence motif" description="NPA">
    <location>
        <begin position="69"/>
        <end position="71"/>
    </location>
</feature>
<feature type="short sequence motif" description="NPG">
    <location>
        <begin position="206"/>
        <end position="208"/>
    </location>
</feature>
<organism>
    <name type="scientific">Encephalitozoon hellem</name>
    <name type="common">Microsporidian parasite</name>
    <dbReference type="NCBI Taxonomy" id="27973"/>
    <lineage>
        <taxon>Eukaryota</taxon>
        <taxon>Fungi</taxon>
        <taxon>Fungi incertae sedis</taxon>
        <taxon>Microsporidia</taxon>
        <taxon>Unikaryonidae</taxon>
        <taxon>Encephalitozoon</taxon>
    </lineage>
</organism>
<name>AQP_ENCHE</name>
<proteinExistence type="inferred from homology"/>
<gene>
    <name type="primary">AQP</name>
</gene>
<comment type="function">
    <text evidence="1">Water channel required to facilitate the transport of water across membranes. Involved in osmotolerance (By similarity).</text>
</comment>
<comment type="subcellular location">
    <subcellularLocation>
        <location evidence="1">Cell membrane</location>
        <topology evidence="1">Multi-pass membrane protein</topology>
    </subcellularLocation>
</comment>
<comment type="domain">
    <text>Aquaporins contain two tandem repeats each containing three membrane-spanning domains and a pore-forming loop with the signature motif Asn-Pro-Ala (NPA). In microsporidia, the second signature motif differs slightly and is Asn-Pro-Gly (NPG).</text>
</comment>
<comment type="similarity">
    <text evidence="3">Belongs to the MIP/aquaporin (TC 1.A.8) family.</text>
</comment>
<accession>Q1M1A0</accession>
<evidence type="ECO:0000250" key="1"/>
<evidence type="ECO:0000255" key="2"/>
<evidence type="ECO:0000305" key="3"/>
<sequence>MAGETLRKIQSLLGEMVASFIFGFAVYSAILGSTIAQQPAAKVIIGLTVGFSAIGIIYSFSDVTIAHFNPAITLAAILTGKMGILCGLGYMLAQCVGFILAVCALLVCSPVGYKETLNVIRPAPAPFGADNLNVFFTEFFLTAILVHIAFAVAVNPYRPKVDTDGKFVDPDEKEPVDRRITAPLCIGLTLGFLAFMGLVTSGGAFNPGLTLAPVIMSNTWQHFWLYLGAQYLGGLVGGLLQVFVLYKLSSN</sequence>
<keyword id="KW-1003">Cell membrane</keyword>
<keyword id="KW-0472">Membrane</keyword>
<keyword id="KW-0677">Repeat</keyword>
<keyword id="KW-0812">Transmembrane</keyword>
<keyword id="KW-1133">Transmembrane helix</keyword>
<keyword id="KW-0813">Transport</keyword>
<dbReference type="EMBL" id="AY325888">
    <property type="protein sequence ID" value="AAQ91842.1"/>
    <property type="molecule type" value="Genomic_DNA"/>
</dbReference>
<dbReference type="SMR" id="Q1M1A0"/>
<dbReference type="VEuPathDB" id="MicrosporidiaDB:EHEL_070710"/>
<dbReference type="VEuPathDB" id="MicrosporidiaDB:KMI_08g12930"/>
<dbReference type="OrthoDB" id="3222at2759"/>
<dbReference type="GO" id="GO:0005886">
    <property type="term" value="C:plasma membrane"/>
    <property type="evidence" value="ECO:0007669"/>
    <property type="project" value="UniProtKB-SubCell"/>
</dbReference>
<dbReference type="GO" id="GO:0015250">
    <property type="term" value="F:water channel activity"/>
    <property type="evidence" value="ECO:0007669"/>
    <property type="project" value="TreeGrafter"/>
</dbReference>
<dbReference type="Gene3D" id="1.20.1080.10">
    <property type="entry name" value="Glycerol uptake facilitator protein"/>
    <property type="match status" value="1"/>
</dbReference>
<dbReference type="InterPro" id="IPR023271">
    <property type="entry name" value="Aquaporin-like"/>
</dbReference>
<dbReference type="InterPro" id="IPR034294">
    <property type="entry name" value="Aquaporin_transptr"/>
</dbReference>
<dbReference type="InterPro" id="IPR000425">
    <property type="entry name" value="MIP"/>
</dbReference>
<dbReference type="InterPro" id="IPR022357">
    <property type="entry name" value="MIP_CS"/>
</dbReference>
<dbReference type="PANTHER" id="PTHR19139">
    <property type="entry name" value="AQUAPORIN TRANSPORTER"/>
    <property type="match status" value="1"/>
</dbReference>
<dbReference type="PANTHER" id="PTHR19139:SF199">
    <property type="entry name" value="MIP17260P"/>
    <property type="match status" value="1"/>
</dbReference>
<dbReference type="Pfam" id="PF00230">
    <property type="entry name" value="MIP"/>
    <property type="match status" value="1"/>
</dbReference>
<dbReference type="PRINTS" id="PR00783">
    <property type="entry name" value="MINTRINSICP"/>
</dbReference>
<dbReference type="SUPFAM" id="SSF81338">
    <property type="entry name" value="Aquaporin-like"/>
    <property type="match status" value="1"/>
</dbReference>
<dbReference type="PROSITE" id="PS00221">
    <property type="entry name" value="MIP"/>
    <property type="match status" value="1"/>
</dbReference>